<organism>
    <name type="scientific">Danio rerio</name>
    <name type="common">Zebrafish</name>
    <name type="synonym">Brachydanio rerio</name>
    <dbReference type="NCBI Taxonomy" id="7955"/>
    <lineage>
        <taxon>Eukaryota</taxon>
        <taxon>Metazoa</taxon>
        <taxon>Chordata</taxon>
        <taxon>Craniata</taxon>
        <taxon>Vertebrata</taxon>
        <taxon>Euteleostomi</taxon>
        <taxon>Actinopterygii</taxon>
        <taxon>Neopterygii</taxon>
        <taxon>Teleostei</taxon>
        <taxon>Ostariophysi</taxon>
        <taxon>Cypriniformes</taxon>
        <taxon>Danionidae</taxon>
        <taxon>Danioninae</taxon>
        <taxon>Danio</taxon>
    </lineage>
</organism>
<comment type="function">
    <text evidence="1">Regulatory subunit of cyclin-dependent kinases that mediates activation of target kinases. Plays a role in transcriptional regulation via its role in regulating the phosphorylation of the C-terminal domain (CTD) of the large subunit of RNA polymerase II (POLR2A).</text>
</comment>
<comment type="subcellular location">
    <subcellularLocation>
        <location evidence="1">Nucleus</location>
    </subcellularLocation>
</comment>
<comment type="developmental stage">
    <text evidence="5">Widely detected at one day post-fertilization (dpf) and continuously expressed in the brain through development.</text>
</comment>
<comment type="disruption phenotype">
    <text evidence="5">Morpholino knockdown of the protein causes unconsumed yolk sac, small eyes, deformed head, reduced lower jaw size and curly spinal cord at low morpholino doses. High morpholino doses lead to embryonic lethality.</text>
</comment>
<comment type="similarity">
    <text evidence="2 3">Belongs to the cyclin family.</text>
</comment>
<name>CCNK_DANRE</name>
<proteinExistence type="evidence at transcript level"/>
<evidence type="ECO:0000250" key="1">
    <source>
        <dbReference type="UniProtKB" id="O75909"/>
    </source>
</evidence>
<evidence type="ECO:0000255" key="2"/>
<evidence type="ECO:0000255" key="3">
    <source>
        <dbReference type="RuleBase" id="RU000383"/>
    </source>
</evidence>
<evidence type="ECO:0000256" key="4">
    <source>
        <dbReference type="SAM" id="MobiDB-lite"/>
    </source>
</evidence>
<evidence type="ECO:0000269" key="5">
    <source>
    </source>
</evidence>
<evidence type="ECO:0000305" key="6"/>
<evidence type="ECO:0000312" key="7">
    <source>
        <dbReference type="EMBL" id="AAI28854.1"/>
    </source>
</evidence>
<reference key="1">
    <citation type="journal article" date="2013" name="Nature">
        <title>The zebrafish reference genome sequence and its relationship to the human genome.</title>
        <authorList>
            <person name="Howe K."/>
            <person name="Clark M.D."/>
            <person name="Torroja C.F."/>
            <person name="Torrance J."/>
            <person name="Berthelot C."/>
            <person name="Muffato M."/>
            <person name="Collins J.E."/>
            <person name="Humphray S."/>
            <person name="McLaren K."/>
            <person name="Matthews L."/>
            <person name="McLaren S."/>
            <person name="Sealy I."/>
            <person name="Caccamo M."/>
            <person name="Churcher C."/>
            <person name="Scott C."/>
            <person name="Barrett J.C."/>
            <person name="Koch R."/>
            <person name="Rauch G.J."/>
            <person name="White S."/>
            <person name="Chow W."/>
            <person name="Kilian B."/>
            <person name="Quintais L.T."/>
            <person name="Guerra-Assuncao J.A."/>
            <person name="Zhou Y."/>
            <person name="Gu Y."/>
            <person name="Yen J."/>
            <person name="Vogel J.H."/>
            <person name="Eyre T."/>
            <person name="Redmond S."/>
            <person name="Banerjee R."/>
            <person name="Chi J."/>
            <person name="Fu B."/>
            <person name="Langley E."/>
            <person name="Maguire S.F."/>
            <person name="Laird G.K."/>
            <person name="Lloyd D."/>
            <person name="Kenyon E."/>
            <person name="Donaldson S."/>
            <person name="Sehra H."/>
            <person name="Almeida-King J."/>
            <person name="Loveland J."/>
            <person name="Trevanion S."/>
            <person name="Jones M."/>
            <person name="Quail M."/>
            <person name="Willey D."/>
            <person name="Hunt A."/>
            <person name="Burton J."/>
            <person name="Sims S."/>
            <person name="McLay K."/>
            <person name="Plumb B."/>
            <person name="Davis J."/>
            <person name="Clee C."/>
            <person name="Oliver K."/>
            <person name="Clark R."/>
            <person name="Riddle C."/>
            <person name="Elliot D."/>
            <person name="Threadgold G."/>
            <person name="Harden G."/>
            <person name="Ware D."/>
            <person name="Begum S."/>
            <person name="Mortimore B."/>
            <person name="Kerry G."/>
            <person name="Heath P."/>
            <person name="Phillimore B."/>
            <person name="Tracey A."/>
            <person name="Corby N."/>
            <person name="Dunn M."/>
            <person name="Johnson C."/>
            <person name="Wood J."/>
            <person name="Clark S."/>
            <person name="Pelan S."/>
            <person name="Griffiths G."/>
            <person name="Smith M."/>
            <person name="Glithero R."/>
            <person name="Howden P."/>
            <person name="Barker N."/>
            <person name="Lloyd C."/>
            <person name="Stevens C."/>
            <person name="Harley J."/>
            <person name="Holt K."/>
            <person name="Panagiotidis G."/>
            <person name="Lovell J."/>
            <person name="Beasley H."/>
            <person name="Henderson C."/>
            <person name="Gordon D."/>
            <person name="Auger K."/>
            <person name="Wright D."/>
            <person name="Collins J."/>
            <person name="Raisen C."/>
            <person name="Dyer L."/>
            <person name="Leung K."/>
            <person name="Robertson L."/>
            <person name="Ambridge K."/>
            <person name="Leongamornlert D."/>
            <person name="McGuire S."/>
            <person name="Gilderthorp R."/>
            <person name="Griffiths C."/>
            <person name="Manthravadi D."/>
            <person name="Nichol S."/>
            <person name="Barker G."/>
            <person name="Whitehead S."/>
            <person name="Kay M."/>
            <person name="Brown J."/>
            <person name="Murnane C."/>
            <person name="Gray E."/>
            <person name="Humphries M."/>
            <person name="Sycamore N."/>
            <person name="Barker D."/>
            <person name="Saunders D."/>
            <person name="Wallis J."/>
            <person name="Babbage A."/>
            <person name="Hammond S."/>
            <person name="Mashreghi-Mohammadi M."/>
            <person name="Barr L."/>
            <person name="Martin S."/>
            <person name="Wray P."/>
            <person name="Ellington A."/>
            <person name="Matthews N."/>
            <person name="Ellwood M."/>
            <person name="Woodmansey R."/>
            <person name="Clark G."/>
            <person name="Cooper J."/>
            <person name="Tromans A."/>
            <person name="Grafham D."/>
            <person name="Skuce C."/>
            <person name="Pandian R."/>
            <person name="Andrews R."/>
            <person name="Harrison E."/>
            <person name="Kimberley A."/>
            <person name="Garnett J."/>
            <person name="Fosker N."/>
            <person name="Hall R."/>
            <person name="Garner P."/>
            <person name="Kelly D."/>
            <person name="Bird C."/>
            <person name="Palmer S."/>
            <person name="Gehring I."/>
            <person name="Berger A."/>
            <person name="Dooley C.M."/>
            <person name="Ersan-Urun Z."/>
            <person name="Eser C."/>
            <person name="Geiger H."/>
            <person name="Geisler M."/>
            <person name="Karotki L."/>
            <person name="Kirn A."/>
            <person name="Konantz J."/>
            <person name="Konantz M."/>
            <person name="Oberlander M."/>
            <person name="Rudolph-Geiger S."/>
            <person name="Teucke M."/>
            <person name="Lanz C."/>
            <person name="Raddatz G."/>
            <person name="Osoegawa K."/>
            <person name="Zhu B."/>
            <person name="Rapp A."/>
            <person name="Widaa S."/>
            <person name="Langford C."/>
            <person name="Yang F."/>
            <person name="Schuster S.C."/>
            <person name="Carter N.P."/>
            <person name="Harrow J."/>
            <person name="Ning Z."/>
            <person name="Herrero J."/>
            <person name="Searle S.M."/>
            <person name="Enright A."/>
            <person name="Geisler R."/>
            <person name="Plasterk R.H."/>
            <person name="Lee C."/>
            <person name="Westerfield M."/>
            <person name="de Jong P.J."/>
            <person name="Zon L.I."/>
            <person name="Postlethwait J.H."/>
            <person name="Nusslein-Volhard C."/>
            <person name="Hubbard T.J."/>
            <person name="Roest Crollius H."/>
            <person name="Rogers J."/>
            <person name="Stemple D.L."/>
        </authorList>
    </citation>
    <scope>NUCLEOTIDE SEQUENCE [LARGE SCALE GENOMIC DNA]</scope>
    <source>
        <strain>Tuebingen</strain>
    </source>
</reference>
<reference key="2">
    <citation type="submission" date="2006-12" db="EMBL/GenBank/DDBJ databases">
        <authorList>
            <consortium name="NIH - Zebrafish Gene Collection (ZGC) project"/>
        </authorList>
    </citation>
    <scope>NUCLEOTIDE SEQUENCE [LARGE SCALE MRNA]</scope>
    <source>
        <tissue evidence="7">Embryo</tissue>
    </source>
</reference>
<reference key="3">
    <citation type="journal article" date="2018" name="Am. J. Hum. Genet.">
        <title>De novo mutations of CCNK cause a syndromic neurodevelopmental disorder with distinctive facial dysmorphism.</title>
        <authorList>
            <person name="Fan Y."/>
            <person name="Yin W."/>
            <person name="Hu B."/>
            <person name="Kline A.D."/>
            <person name="Zhang V.W."/>
            <person name="Liang D."/>
            <person name="Sun Y."/>
            <person name="Wang L."/>
            <person name="Tang S."/>
            <person name="Powis Z."/>
            <person name="Li L."/>
            <person name="Yan H."/>
            <person name="Shi Z."/>
            <person name="Yang X."/>
            <person name="Chen Y."/>
            <person name="Wang J."/>
            <person name="Jiang Y."/>
            <person name="Tan H."/>
            <person name="Gu X."/>
            <person name="Wu L."/>
            <person name="Yu Y."/>
        </authorList>
    </citation>
    <scope>DEVELOPMENTAL STAGE</scope>
    <scope>DISRUPTION PHENOTYPE</scope>
</reference>
<accession>F1QMB9</accession>
<accession>A1A5X9</accession>
<feature type="chain" id="PRO_0000446921" description="Cyclin-K">
    <location>
        <begin position="1"/>
        <end position="425"/>
    </location>
</feature>
<feature type="region of interest" description="Disordered" evidence="4">
    <location>
        <begin position="262"/>
        <end position="425"/>
    </location>
</feature>
<feature type="compositionally biased region" description="Low complexity" evidence="4">
    <location>
        <begin position="366"/>
        <end position="377"/>
    </location>
</feature>
<feature type="compositionally biased region" description="Pro residues" evidence="4">
    <location>
        <begin position="379"/>
        <end position="399"/>
    </location>
</feature>
<feature type="sequence conflict" description="In Ref. 2; AAI28854." evidence="6" ref="2">
    <original>A</original>
    <variation>S</variation>
    <location>
        <position position="10"/>
    </location>
</feature>
<feature type="sequence conflict" description="In Ref. 2; AAI28854." evidence="6" ref="2">
    <original>PP</original>
    <variation>SG</variation>
    <location>
        <begin position="397"/>
        <end position="398"/>
    </location>
</feature>
<feature type="sequence conflict" description="In Ref. 2; AAI28854." evidence="6" ref="2">
    <original>DD</original>
    <variation>EV</variation>
    <location>
        <begin position="421"/>
        <end position="422"/>
    </location>
</feature>
<protein>
    <recommendedName>
        <fullName>Cyclin-K</fullName>
    </recommendedName>
</protein>
<sequence length="425" mass="47894">MKDGKENSNATFGSFTTNLDHTKPCWYWDKKDLAHTPSQSDLDPATEARYRREGARFIFDVGTRLGLHYDTLATGITYFHRFYMFHSFKQFPRYVTGACCLFLAGKVEETPKKCKDIIKTARSLLNDVQFAQFGDDPKEEVMVLERILLQTIKFDLQVEHPYQFLLRYAKQLKGDKNKVQKLVQMAWTFVNDSLCTMLSLQWEPEIIAVAVMYLAGRLCKFDIQEWTSKQSSRRWWEQFVQDVPVELLEDICHQILDLYSQGKQPIPQQPPMQDKEKPPPPPAAPPGQSGAQNPPAQPPSKKNSPQASPPAKIKRQHVSPKDEPKAPAEQVGSKIPRLESPMPPLPVSQPPERKTPSAIPAPPAEAEPAAASELDPAQGPAPPLPHGAPPPLPHRPPPTEFGGPCSDFLSSVKHKRRYLDDDRNL</sequence>
<gene>
    <name type="primary">ccnk</name>
    <name type="ORF">si:dkey-60a16.2</name>
</gene>
<dbReference type="EMBL" id="BX649499">
    <property type="status" value="NOT_ANNOTATED_CDS"/>
    <property type="molecule type" value="Genomic_DNA"/>
</dbReference>
<dbReference type="EMBL" id="CU104739">
    <property type="status" value="NOT_ANNOTATED_CDS"/>
    <property type="molecule type" value="Genomic_DNA"/>
</dbReference>
<dbReference type="EMBL" id="BC128853">
    <property type="protein sequence ID" value="AAI28854.1"/>
    <property type="molecule type" value="mRNA"/>
</dbReference>
<dbReference type="SMR" id="F1QMB9"/>
<dbReference type="FunCoup" id="F1QMB9">
    <property type="interactions" value="1095"/>
</dbReference>
<dbReference type="STRING" id="7955.ENSDARP00000113893"/>
<dbReference type="PaxDb" id="7955-ENSDARP00000113893"/>
<dbReference type="Ensembl" id="ENSDART00000104581">
    <property type="protein sequence ID" value="ENSDARP00000095353"/>
    <property type="gene ID" value="ENSDARG00000034146"/>
</dbReference>
<dbReference type="AGR" id="ZFIN:ZDB-GENE-030131-5126"/>
<dbReference type="ZFIN" id="ZDB-GENE-030131-5126">
    <property type="gene designation" value="ccnk"/>
</dbReference>
<dbReference type="InParanoid" id="F1QMB9"/>
<dbReference type="Reactome" id="R-DRE-674695">
    <property type="pathway name" value="RNA Polymerase II Pre-transcription Events"/>
</dbReference>
<dbReference type="Reactome" id="R-DRE-6796648">
    <property type="pathway name" value="TP53 Regulates Transcription of DNA Repair Genes"/>
</dbReference>
<dbReference type="Reactome" id="R-DRE-6807505">
    <property type="pathway name" value="RNA polymerase II transcribes snRNA genes"/>
</dbReference>
<dbReference type="PRO" id="PR:F1QMB9"/>
<dbReference type="Proteomes" id="UP000000437">
    <property type="component" value="Unplaced"/>
</dbReference>
<dbReference type="Bgee" id="ENSDARG00000034146">
    <property type="expression patterns" value="Expressed in presomitic mesoderm and 26 other cell types or tissues"/>
</dbReference>
<dbReference type="ExpressionAtlas" id="F1QMB9">
    <property type="expression patterns" value="baseline and differential"/>
</dbReference>
<dbReference type="GO" id="GO:0008024">
    <property type="term" value="C:cyclin/CDK positive transcription elongation factor complex"/>
    <property type="evidence" value="ECO:0000318"/>
    <property type="project" value="GO_Central"/>
</dbReference>
<dbReference type="GO" id="GO:0005634">
    <property type="term" value="C:nucleus"/>
    <property type="evidence" value="ECO:0000318"/>
    <property type="project" value="GO_Central"/>
</dbReference>
<dbReference type="GO" id="GO:0061575">
    <property type="term" value="F:cyclin-dependent protein serine/threonine kinase activator activity"/>
    <property type="evidence" value="ECO:0000318"/>
    <property type="project" value="GO_Central"/>
</dbReference>
<dbReference type="GO" id="GO:0051301">
    <property type="term" value="P:cell division"/>
    <property type="evidence" value="ECO:0007669"/>
    <property type="project" value="UniProtKB-KW"/>
</dbReference>
<dbReference type="GO" id="GO:0007417">
    <property type="term" value="P:central nervous system development"/>
    <property type="evidence" value="ECO:0000315"/>
    <property type="project" value="ZFIN"/>
</dbReference>
<dbReference type="GO" id="GO:0032786">
    <property type="term" value="P:positive regulation of DNA-templated transcription, elongation"/>
    <property type="evidence" value="ECO:0000318"/>
    <property type="project" value="GO_Central"/>
</dbReference>
<dbReference type="GO" id="GO:0045944">
    <property type="term" value="P:positive regulation of transcription by RNA polymerase II"/>
    <property type="evidence" value="ECO:0000318"/>
    <property type="project" value="GO_Central"/>
</dbReference>
<dbReference type="CDD" id="cd20530">
    <property type="entry name" value="CYCLIN_CCNK_rpt1"/>
    <property type="match status" value="1"/>
</dbReference>
<dbReference type="CDD" id="cd20531">
    <property type="entry name" value="CYCLIN_CCNK_rpt2"/>
    <property type="match status" value="1"/>
</dbReference>
<dbReference type="FunFam" id="1.10.472.10:FF:000018">
    <property type="entry name" value="Cyclin-K (Predicted)"/>
    <property type="match status" value="1"/>
</dbReference>
<dbReference type="FunFam" id="1.10.472.10:FF:000021">
    <property type="entry name" value="Cyclin-K (Predicted)"/>
    <property type="match status" value="1"/>
</dbReference>
<dbReference type="Gene3D" id="1.10.472.10">
    <property type="entry name" value="Cyclin-like"/>
    <property type="match status" value="2"/>
</dbReference>
<dbReference type="InterPro" id="IPR013763">
    <property type="entry name" value="Cyclin-like_dom"/>
</dbReference>
<dbReference type="InterPro" id="IPR036915">
    <property type="entry name" value="Cyclin-like_sf"/>
</dbReference>
<dbReference type="InterPro" id="IPR043198">
    <property type="entry name" value="Cyclin/Ssn8"/>
</dbReference>
<dbReference type="InterPro" id="IPR004367">
    <property type="entry name" value="Cyclin_C-dom"/>
</dbReference>
<dbReference type="InterPro" id="IPR006671">
    <property type="entry name" value="Cyclin_N"/>
</dbReference>
<dbReference type="PANTHER" id="PTHR10026">
    <property type="entry name" value="CYCLIN"/>
    <property type="match status" value="1"/>
</dbReference>
<dbReference type="Pfam" id="PF00134">
    <property type="entry name" value="Cyclin_N"/>
    <property type="match status" value="1"/>
</dbReference>
<dbReference type="Pfam" id="PF21797">
    <property type="entry name" value="CycT2-like_C"/>
    <property type="match status" value="1"/>
</dbReference>
<dbReference type="SMART" id="SM00385">
    <property type="entry name" value="CYCLIN"/>
    <property type="match status" value="2"/>
</dbReference>
<dbReference type="SMART" id="SM01332">
    <property type="entry name" value="Cyclin_C"/>
    <property type="match status" value="1"/>
</dbReference>
<dbReference type="SUPFAM" id="SSF47954">
    <property type="entry name" value="Cyclin-like"/>
    <property type="match status" value="2"/>
</dbReference>
<keyword id="KW-0131">Cell cycle</keyword>
<keyword id="KW-0132">Cell division</keyword>
<keyword id="KW-0195">Cyclin</keyword>
<keyword id="KW-0498">Mitosis</keyword>
<keyword id="KW-0539">Nucleus</keyword>
<keyword id="KW-1185">Reference proteome</keyword>
<keyword id="KW-0804">Transcription</keyword>
<keyword id="KW-0805">Transcription regulation</keyword>